<name>RRG8_CANGA</name>
<reference key="1">
    <citation type="journal article" date="2004" name="Nature">
        <title>Genome evolution in yeasts.</title>
        <authorList>
            <person name="Dujon B."/>
            <person name="Sherman D."/>
            <person name="Fischer G."/>
            <person name="Durrens P."/>
            <person name="Casaregola S."/>
            <person name="Lafontaine I."/>
            <person name="de Montigny J."/>
            <person name="Marck C."/>
            <person name="Neuveglise C."/>
            <person name="Talla E."/>
            <person name="Goffard N."/>
            <person name="Frangeul L."/>
            <person name="Aigle M."/>
            <person name="Anthouard V."/>
            <person name="Babour A."/>
            <person name="Barbe V."/>
            <person name="Barnay S."/>
            <person name="Blanchin S."/>
            <person name="Beckerich J.-M."/>
            <person name="Beyne E."/>
            <person name="Bleykasten C."/>
            <person name="Boisrame A."/>
            <person name="Boyer J."/>
            <person name="Cattolico L."/>
            <person name="Confanioleri F."/>
            <person name="de Daruvar A."/>
            <person name="Despons L."/>
            <person name="Fabre E."/>
            <person name="Fairhead C."/>
            <person name="Ferry-Dumazet H."/>
            <person name="Groppi A."/>
            <person name="Hantraye F."/>
            <person name="Hennequin C."/>
            <person name="Jauniaux N."/>
            <person name="Joyet P."/>
            <person name="Kachouri R."/>
            <person name="Kerrest A."/>
            <person name="Koszul R."/>
            <person name="Lemaire M."/>
            <person name="Lesur I."/>
            <person name="Ma L."/>
            <person name="Muller H."/>
            <person name="Nicaud J.-M."/>
            <person name="Nikolski M."/>
            <person name="Oztas S."/>
            <person name="Ozier-Kalogeropoulos O."/>
            <person name="Pellenz S."/>
            <person name="Potier S."/>
            <person name="Richard G.-F."/>
            <person name="Straub M.-L."/>
            <person name="Suleau A."/>
            <person name="Swennen D."/>
            <person name="Tekaia F."/>
            <person name="Wesolowski-Louvel M."/>
            <person name="Westhof E."/>
            <person name="Wirth B."/>
            <person name="Zeniou-Meyer M."/>
            <person name="Zivanovic Y."/>
            <person name="Bolotin-Fukuhara M."/>
            <person name="Thierry A."/>
            <person name="Bouchier C."/>
            <person name="Caudron B."/>
            <person name="Scarpelli C."/>
            <person name="Gaillardin C."/>
            <person name="Weissenbach J."/>
            <person name="Wincker P."/>
            <person name="Souciet J.-L."/>
        </authorList>
    </citation>
    <scope>NUCLEOTIDE SEQUENCE [LARGE SCALE GENOMIC DNA]</scope>
    <source>
        <strain>ATCC 2001 / BCRC 20586 / JCM 3761 / NBRC 0622 / NRRL Y-65 / CBS 138</strain>
    </source>
</reference>
<protein>
    <recommendedName>
        <fullName>Required for respiratory growth protein 8, mitochondrial</fullName>
    </recommendedName>
</protein>
<accession>Q6FVY4</accession>
<gene>
    <name type="primary">RRG8</name>
    <name type="ordered locus">CAGL0D04488g</name>
</gene>
<sequence length="260" mass="30184">MPRLERNVYKGLITSLSRKKPSNSLAVKESPLLTKFERWSGKRMKLFFESEDSFEHYGLRDLKLPHNMLANKLASPIRAERNTRYRIPKEFLIKLNLYKDATNNVLQLKANFNGVTGLGTTYIHNNKKCLEMKFCDISRWSSRQPLKVPPLPIVADKSALLKDYENQLIRELNECFSKLKTTSKHDHNTVKLYVSTENNLLMDVDTQGSLCINLQSITDKLPHTMLETVTNAPIHISAYSNMDFLTTLHRLLGYYRHRNR</sequence>
<dbReference type="EMBL" id="CR380950">
    <property type="protein sequence ID" value="CAG58521.1"/>
    <property type="molecule type" value="Genomic_DNA"/>
</dbReference>
<dbReference type="RefSeq" id="XP_445610.1">
    <property type="nucleotide sequence ID" value="XM_445610.1"/>
</dbReference>
<dbReference type="FunCoup" id="Q6FVY4">
    <property type="interactions" value="34"/>
</dbReference>
<dbReference type="STRING" id="284593.Q6FVY4"/>
<dbReference type="EnsemblFungi" id="CAGL0D04488g-T">
    <property type="protein sequence ID" value="CAGL0D04488g-T-p1"/>
    <property type="gene ID" value="CAGL0D04488g"/>
</dbReference>
<dbReference type="KEGG" id="cgr:2887053"/>
<dbReference type="CGD" id="CAL0128251">
    <property type="gene designation" value="CAGL0D04488g"/>
</dbReference>
<dbReference type="VEuPathDB" id="FungiDB:CAGL0D04488g"/>
<dbReference type="eggNOG" id="ENOG502S46Y">
    <property type="taxonomic scope" value="Eukaryota"/>
</dbReference>
<dbReference type="HOGENOM" id="CLU_090059_0_0_1"/>
<dbReference type="InParanoid" id="Q6FVY4"/>
<dbReference type="Proteomes" id="UP000002428">
    <property type="component" value="Chromosome D"/>
</dbReference>
<dbReference type="GO" id="GO:0005739">
    <property type="term" value="C:mitochondrion"/>
    <property type="evidence" value="ECO:0007669"/>
    <property type="project" value="UniProtKB-SubCell"/>
</dbReference>
<dbReference type="GO" id="GO:0000002">
    <property type="term" value="P:mitochondrial genome maintenance"/>
    <property type="evidence" value="ECO:0007669"/>
    <property type="project" value="InterPro"/>
</dbReference>
<dbReference type="InterPro" id="IPR031415">
    <property type="entry name" value="Rrg8"/>
</dbReference>
<dbReference type="Pfam" id="PF17068">
    <property type="entry name" value="RRG8"/>
    <property type="match status" value="1"/>
</dbReference>
<keyword id="KW-0496">Mitochondrion</keyword>
<keyword id="KW-1185">Reference proteome</keyword>
<proteinExistence type="inferred from homology"/>
<comment type="function">
    <text evidence="1">Required for respiratory activity and maintenance and expression of the mitochondrial genome.</text>
</comment>
<comment type="subcellular location">
    <subcellularLocation>
        <location evidence="1">Mitochondrion</location>
    </subcellularLocation>
</comment>
<comment type="similarity">
    <text evidence="2">Belongs to the RRG8 family.</text>
</comment>
<organism>
    <name type="scientific">Candida glabrata (strain ATCC 2001 / BCRC 20586 / JCM 3761 / NBRC 0622 / NRRL Y-65 / CBS 138)</name>
    <name type="common">Yeast</name>
    <name type="synonym">Nakaseomyces glabratus</name>
    <dbReference type="NCBI Taxonomy" id="284593"/>
    <lineage>
        <taxon>Eukaryota</taxon>
        <taxon>Fungi</taxon>
        <taxon>Dikarya</taxon>
        <taxon>Ascomycota</taxon>
        <taxon>Saccharomycotina</taxon>
        <taxon>Saccharomycetes</taxon>
        <taxon>Saccharomycetales</taxon>
        <taxon>Saccharomycetaceae</taxon>
        <taxon>Nakaseomyces</taxon>
    </lineage>
</organism>
<feature type="chain" id="PRO_0000405465" description="Required for respiratory growth protein 8, mitochondrial">
    <location>
        <begin position="1"/>
        <end position="260"/>
    </location>
</feature>
<evidence type="ECO:0000250" key="1"/>
<evidence type="ECO:0000305" key="2"/>